<sequence>MGSRSRILLIGATGYIGRHVAKASLDLGHPTFLLVRESTASSNSEKAQLLESFKASGANIVHGSIDDHASLVEAVKNVDVVISTVGSLQIESQVNIIKAIKEVGTVKRFFPSEFGNDVDNVHAVEPAKSVFEVKAKVRRAIEAEGIPYTYVSSNCFAGYFLRSLAQAGLTAPPRDKVVILGDGNARVVFVKEEDIGTFTIKAVDDPRTLNKTLYLRLPANTLSLNELVALWEKKIDKTLEKAYVPEEEVLKLIADTPFPANISIAISHSIFVKGDQTNFEIGPAGVEASQLYPDVKYTTVDEYLSNFV</sequence>
<evidence type="ECO:0000250" key="1">
    <source>
        <dbReference type="UniProtKB" id="Q9LD14"/>
    </source>
</evidence>
<evidence type="ECO:0000269" key="2">
    <source>
    </source>
</evidence>
<evidence type="ECO:0000269" key="3">
    <source>
    </source>
</evidence>
<evidence type="ECO:0000303" key="4">
    <source>
    </source>
</evidence>
<evidence type="ECO:0000303" key="5">
    <source>
    </source>
</evidence>
<evidence type="ECO:0000305" key="6"/>
<evidence type="ECO:0000305" key="7">
    <source>
    </source>
</evidence>
<evidence type="ECO:0007829" key="8">
    <source>
        <dbReference type="PDB" id="1QYC"/>
    </source>
</evidence>
<protein>
    <recommendedName>
        <fullName evidence="4">Phenylcoumaran benzylic ether reductase PT1</fullName>
        <shortName evidence="4">PCBER-Pt1</shortName>
        <ecNumber evidence="2 3">1.23.1.-</ecNumber>
    </recommendedName>
    <alternativeName>
        <fullName evidence="5">PtPCBER</fullName>
    </alternativeName>
</protein>
<proteinExistence type="evidence at protein level"/>
<feature type="chain" id="PRO_0000442613" description="Phenylcoumaran benzylic ether reductase PT1">
    <location>
        <begin position="1"/>
        <end position="308"/>
    </location>
</feature>
<feature type="active site" description="Proton acceptor" evidence="1">
    <location>
        <position position="134"/>
    </location>
</feature>
<feature type="binding site" evidence="7">
    <location>
        <begin position="11"/>
        <end position="17"/>
    </location>
    <ligand>
        <name>NADP(+)</name>
        <dbReference type="ChEBI" id="CHEBI:58349"/>
    </ligand>
</feature>
<feature type="binding site" evidence="1">
    <location>
        <position position="36"/>
    </location>
    <ligand>
        <name>NADP(+)</name>
        <dbReference type="ChEBI" id="CHEBI:58349"/>
    </ligand>
</feature>
<feature type="binding site" evidence="1">
    <location>
        <position position="46"/>
    </location>
    <ligand>
        <name>NADP(+)</name>
        <dbReference type="ChEBI" id="CHEBI:58349"/>
    </ligand>
</feature>
<feature type="binding site" evidence="1">
    <location>
        <position position="138"/>
    </location>
    <ligand>
        <name>NADP(+)</name>
        <dbReference type="ChEBI" id="CHEBI:58349"/>
    </ligand>
</feature>
<feature type="sequence conflict" description="In Ref. 1; AAC32591." evidence="6" ref="1">
    <original>V</original>
    <variation>I</variation>
    <location>
        <position position="103"/>
    </location>
</feature>
<feature type="sequence conflict" description="In Ref. 1; AAC32591." evidence="6" ref="1">
    <original>S</original>
    <variation>N</variation>
    <location>
        <position position="129"/>
    </location>
</feature>
<feature type="strand" evidence="8">
    <location>
        <begin position="7"/>
        <end position="11"/>
    </location>
</feature>
<feature type="helix" evidence="8">
    <location>
        <begin position="17"/>
        <end position="26"/>
    </location>
</feature>
<feature type="strand" evidence="8">
    <location>
        <begin position="31"/>
        <end position="34"/>
    </location>
</feature>
<feature type="turn" evidence="8">
    <location>
        <begin position="40"/>
        <end position="43"/>
    </location>
</feature>
<feature type="helix" evidence="8">
    <location>
        <begin position="44"/>
        <end position="54"/>
    </location>
</feature>
<feature type="turn" evidence="8">
    <location>
        <begin position="55"/>
        <end position="57"/>
    </location>
</feature>
<feature type="strand" evidence="8">
    <location>
        <begin position="59"/>
        <end position="61"/>
    </location>
</feature>
<feature type="helix" evidence="8">
    <location>
        <begin position="68"/>
        <end position="76"/>
    </location>
</feature>
<feature type="strand" evidence="8">
    <location>
        <begin position="79"/>
        <end position="83"/>
    </location>
</feature>
<feature type="helix" evidence="8">
    <location>
        <begin position="87"/>
        <end position="89"/>
    </location>
</feature>
<feature type="helix" evidence="8">
    <location>
        <begin position="91"/>
        <end position="93"/>
    </location>
</feature>
<feature type="helix" evidence="8">
    <location>
        <begin position="94"/>
        <end position="103"/>
    </location>
</feature>
<feature type="strand" evidence="8">
    <location>
        <begin position="107"/>
        <end position="110"/>
    </location>
</feature>
<feature type="helix" evidence="8">
    <location>
        <begin position="127"/>
        <end position="144"/>
    </location>
</feature>
<feature type="strand" evidence="8">
    <location>
        <begin position="148"/>
        <end position="152"/>
    </location>
</feature>
<feature type="helix" evidence="8">
    <location>
        <begin position="157"/>
        <end position="160"/>
    </location>
</feature>
<feature type="turn" evidence="8">
    <location>
        <begin position="161"/>
        <end position="165"/>
    </location>
</feature>
<feature type="strand" evidence="8">
    <location>
        <begin position="174"/>
        <end position="180"/>
    </location>
</feature>
<feature type="strand" evidence="8">
    <location>
        <begin position="186"/>
        <end position="190"/>
    </location>
</feature>
<feature type="helix" evidence="8">
    <location>
        <begin position="192"/>
        <end position="200"/>
    </location>
</feature>
<feature type="helix" evidence="8">
    <location>
        <begin position="206"/>
        <end position="208"/>
    </location>
</feature>
<feature type="strand" evidence="8">
    <location>
        <begin position="211"/>
        <end position="214"/>
    </location>
</feature>
<feature type="helix" evidence="8">
    <location>
        <begin position="218"/>
        <end position="220"/>
    </location>
</feature>
<feature type="strand" evidence="8">
    <location>
        <begin position="221"/>
        <end position="223"/>
    </location>
</feature>
<feature type="helix" evidence="8">
    <location>
        <begin position="224"/>
        <end position="234"/>
    </location>
</feature>
<feature type="strand" evidence="8">
    <location>
        <begin position="240"/>
        <end position="244"/>
    </location>
</feature>
<feature type="helix" evidence="8">
    <location>
        <begin position="246"/>
        <end position="254"/>
    </location>
</feature>
<feature type="helix" evidence="8">
    <location>
        <begin position="260"/>
        <end position="271"/>
    </location>
</feature>
<feature type="turn" evidence="8">
    <location>
        <begin position="275"/>
        <end position="277"/>
    </location>
</feature>
<feature type="strand" evidence="8">
    <location>
        <begin position="285"/>
        <end position="287"/>
    </location>
</feature>
<feature type="helix" evidence="8">
    <location>
        <begin position="288"/>
        <end position="291"/>
    </location>
</feature>
<feature type="helix" evidence="8">
    <location>
        <begin position="300"/>
        <end position="305"/>
    </location>
</feature>
<dbReference type="EC" id="1.23.1.-" evidence="2 3"/>
<dbReference type="EMBL" id="AF081678">
    <property type="protein sequence ID" value="AAC32591.1"/>
    <property type="molecule type" value="mRNA"/>
</dbReference>
<dbReference type="EMBL" id="AF242490">
    <property type="protein sequence ID" value="AAF64173.2"/>
    <property type="molecule type" value="mRNA"/>
</dbReference>
<dbReference type="PDB" id="1QYC">
    <property type="method" value="X-ray"/>
    <property type="resolution" value="2.20 A"/>
    <property type="chains" value="A/B=1-308"/>
</dbReference>
<dbReference type="PDBsum" id="1QYC"/>
<dbReference type="SMR" id="Q9LL41"/>
<dbReference type="EvolutionaryTrace" id="Q9LL41"/>
<dbReference type="GO" id="GO:0050664">
    <property type="term" value="F:oxidoreductase activity, acting on NAD(P)H, oxygen as acceptor"/>
    <property type="evidence" value="ECO:0000314"/>
    <property type="project" value="UniProtKB"/>
</dbReference>
<dbReference type="GO" id="GO:0009807">
    <property type="term" value="P:lignan biosynthetic process"/>
    <property type="evidence" value="ECO:0000314"/>
    <property type="project" value="UniProtKB"/>
</dbReference>
<dbReference type="CDD" id="cd05259">
    <property type="entry name" value="PCBER_SDR_a"/>
    <property type="match status" value="1"/>
</dbReference>
<dbReference type="Gene3D" id="3.40.50.720">
    <property type="entry name" value="NAD(P)-binding Rossmann-like Domain"/>
    <property type="match status" value="1"/>
</dbReference>
<dbReference type="Gene3D" id="3.90.25.10">
    <property type="entry name" value="UDP-galactose 4-epimerase, domain 1"/>
    <property type="match status" value="1"/>
</dbReference>
<dbReference type="InterPro" id="IPR036291">
    <property type="entry name" value="NAD(P)-bd_dom_sf"/>
</dbReference>
<dbReference type="InterPro" id="IPR008030">
    <property type="entry name" value="NmrA-like"/>
</dbReference>
<dbReference type="InterPro" id="IPR050608">
    <property type="entry name" value="NmrA-type/Isoflavone_red_sf"/>
</dbReference>
<dbReference type="InterPro" id="IPR045312">
    <property type="entry name" value="PCBER-like"/>
</dbReference>
<dbReference type="PANTHER" id="PTHR43349:SF93">
    <property type="entry name" value="ISOFLAVONE REDUCTASE HOMOLOG P3-RELATED"/>
    <property type="match status" value="1"/>
</dbReference>
<dbReference type="PANTHER" id="PTHR43349">
    <property type="entry name" value="PINORESINOL REDUCTASE-RELATED"/>
    <property type="match status" value="1"/>
</dbReference>
<dbReference type="Pfam" id="PF05368">
    <property type="entry name" value="NmrA"/>
    <property type="match status" value="1"/>
</dbReference>
<dbReference type="SUPFAM" id="SSF51735">
    <property type="entry name" value="NAD(P)-binding Rossmann-fold domains"/>
    <property type="match status" value="1"/>
</dbReference>
<comment type="function">
    <text evidence="2 3">Oxidoreductase involved in lignan biosynthesis. Catalyzes the NADPH-dependent reduction of phenylcoumaran benzylic ethers. Converts dehydrodiconiferyl alcohol (DDC) to isodihydrodehydrodiconiferyl alcohol (IDDDC), and dihydrodehydrodiconiferyl alcohol (DDDC) to tetrahydrodehydrodiconiferyl alcohol (TDDC).</text>
</comment>
<comment type="catalytic activity">
    <reaction evidence="2 3">
        <text>(-)-dehydrodiconiferyl alcohol + NADPH + H(+) = (S)-isodihydrodehydrodiconiferyl alcohol + NADP(+)</text>
        <dbReference type="Rhea" id="RHEA:59440"/>
        <dbReference type="ChEBI" id="CHEBI:15378"/>
        <dbReference type="ChEBI" id="CHEBI:57783"/>
        <dbReference type="ChEBI" id="CHEBI:58349"/>
        <dbReference type="ChEBI" id="CHEBI:70467"/>
        <dbReference type="ChEBI" id="CHEBI:143259"/>
    </reaction>
</comment>
<comment type="catalytic activity">
    <reaction evidence="2 3">
        <text>(+)-dehydrodiconiferyl alcohol + NADPH + H(+) = (R)-isodihydrodehydrodiconiferyl alcohol + NADP(+)</text>
        <dbReference type="Rhea" id="RHEA:59844"/>
        <dbReference type="ChEBI" id="CHEBI:15378"/>
        <dbReference type="ChEBI" id="CHEBI:57783"/>
        <dbReference type="ChEBI" id="CHEBI:58349"/>
        <dbReference type="ChEBI" id="CHEBI:143256"/>
        <dbReference type="ChEBI" id="CHEBI:143260"/>
    </reaction>
</comment>
<comment type="catalytic activity">
    <reaction evidence="2 3">
        <text>(2R,3S)-dihydrodehydrodiconiferyl alcohol + NADPH + H(+) = (S)-tetrahydrodehydrodiconiferyl alcohol + NADP(+)</text>
        <dbReference type="Rhea" id="RHEA:59848"/>
        <dbReference type="ChEBI" id="CHEBI:15378"/>
        <dbReference type="ChEBI" id="CHEBI:57783"/>
        <dbReference type="ChEBI" id="CHEBI:58349"/>
        <dbReference type="ChEBI" id="CHEBI:143258"/>
        <dbReference type="ChEBI" id="CHEBI:143262"/>
    </reaction>
</comment>
<comment type="catalytic activity">
    <reaction evidence="2 3">
        <text>(2S,3R)-dihydrodehydrodiconiferyl alcohol + NADPH + H(+) = (R)-tetrahydrodehydrodiconiferyl alcohol + NADP(+)</text>
        <dbReference type="Rhea" id="RHEA:59852"/>
        <dbReference type="ChEBI" id="CHEBI:15378"/>
        <dbReference type="ChEBI" id="CHEBI:57783"/>
        <dbReference type="ChEBI" id="CHEBI:58349"/>
        <dbReference type="ChEBI" id="CHEBI:143257"/>
        <dbReference type="ChEBI" id="CHEBI:143263"/>
    </reaction>
</comment>
<comment type="biophysicochemical properties">
    <kinetics>
        <KM evidence="2">0.61 mM for dehydrodiconiferyl alcohol</KM>
        <KM evidence="2">1.95 mM for dihydrodehydrodiconiferyl alcohol</KM>
        <Vmax evidence="2">104.2 nmol/h/mg enzyme toward dehydrodiconiferyl alcohol</Vmax>
        <Vmax evidence="2">55.8 nmol/h/mg enzyme toward dihydrodehydrodiconiferyl alcohol</Vmax>
    </kinetics>
</comment>
<comment type="similarity">
    <text evidence="6">Belongs to the NmrA-type oxidoreductase family. Isoflavone reductase subfamily.</text>
</comment>
<organism>
    <name type="scientific">Pinus taeda</name>
    <name type="common">Loblolly pine</name>
    <dbReference type="NCBI Taxonomy" id="3352"/>
    <lineage>
        <taxon>Eukaryota</taxon>
        <taxon>Viridiplantae</taxon>
        <taxon>Streptophyta</taxon>
        <taxon>Embryophyta</taxon>
        <taxon>Tracheophyta</taxon>
        <taxon>Spermatophyta</taxon>
        <taxon>Pinopsida</taxon>
        <taxon>Pinidae</taxon>
        <taxon>Conifers I</taxon>
        <taxon>Pinales</taxon>
        <taxon>Pinaceae</taxon>
        <taxon>Pinus</taxon>
        <taxon>Pinus subgen. Pinus</taxon>
    </lineage>
</organism>
<accession>Q9LL41</accession>
<accession>O81651</accession>
<keyword id="KW-0002">3D-structure</keyword>
<keyword id="KW-0521">NADP</keyword>
<keyword id="KW-0560">Oxidoreductase</keyword>
<reference key="1">
    <citation type="journal article" date="1999" name="J. Biol. Chem.">
        <title>Evolution of plant defense mechanisms. Relationships of phenylcoumaran benzylic ether reductases to pinoresinol-lariciresinol and isoflavone reductases.</title>
        <authorList>
            <person name="Gang D.R."/>
            <person name="Kasahara H."/>
            <person name="Xia Z.Q."/>
            <person name="Vander Mijnsbrugge K."/>
            <person name="Bauw G."/>
            <person name="Boerjan W."/>
            <person name="Van Montagu M."/>
            <person name="Davin L.B."/>
            <person name="Lewis N.G."/>
        </authorList>
    </citation>
    <scope>NUCLEOTIDE SEQUENCE [MRNA]</scope>
    <scope>FUNCTION</scope>
    <scope>CATALYTIC ACTIVITY</scope>
    <scope>BIOPHYSICOCHEMICAL PROPERTIES</scope>
</reference>
<reference key="2">
    <citation type="journal article" date="2002" name="Plant Mol. Biol.">
        <title>Expression patterns of two tobacco isoflavone reductase-like genes and their possible roles in secondary metabolism in tobacco.</title>
        <authorList>
            <person name="Shoji T."/>
            <person name="Winz R."/>
            <person name="Iwase T."/>
            <person name="Nakajima K."/>
            <person name="Yamada Y."/>
            <person name="Hashimoto T."/>
        </authorList>
    </citation>
    <scope>FUNCTION</scope>
    <scope>CATALYTIC ACTIVITY</scope>
</reference>
<reference key="3">
    <citation type="journal article" date="2003" name="J. Biol. Chem.">
        <title>Crystal structures of pinoresinol-lariciresinol and phenylcoumaran benzylic ether reductases and their relationship to isoflavone reductases.</title>
        <authorList>
            <person name="Min T."/>
            <person name="Kasahara H."/>
            <person name="Bedgar D.L."/>
            <person name="Youn B."/>
            <person name="Lawrence P.K."/>
            <person name="Gang D.R."/>
            <person name="Halls S.C."/>
            <person name="Park H."/>
            <person name="Hilsenbeck J.L."/>
            <person name="Davin L.B."/>
            <person name="Lewis N.G."/>
            <person name="Kang C."/>
            <person name="Lewis N.G."/>
        </authorList>
    </citation>
    <scope>X-RAY CRYSTALLOGRAPHY (2.20 ANGSTROMS)</scope>
</reference>
<name>PCBER_PINTA</name>
<gene>
    <name evidence="6" type="primary">PCBER</name>
</gene>